<feature type="chain" id="PRO_1000049548" description="Glycerol-3-phosphate dehydrogenase [NAD(P)+]">
    <location>
        <begin position="1"/>
        <end position="338"/>
    </location>
</feature>
<feature type="active site" description="Proton acceptor" evidence="1">
    <location>
        <position position="194"/>
    </location>
</feature>
<feature type="binding site" evidence="1">
    <location>
        <position position="14"/>
    </location>
    <ligand>
        <name>NADPH</name>
        <dbReference type="ChEBI" id="CHEBI:57783"/>
    </ligand>
</feature>
<feature type="binding site" evidence="1">
    <location>
        <position position="15"/>
    </location>
    <ligand>
        <name>NADPH</name>
        <dbReference type="ChEBI" id="CHEBI:57783"/>
    </ligand>
</feature>
<feature type="binding site" evidence="1">
    <location>
        <position position="35"/>
    </location>
    <ligand>
        <name>NADPH</name>
        <dbReference type="ChEBI" id="CHEBI:57783"/>
    </ligand>
</feature>
<feature type="binding site" evidence="1">
    <location>
        <position position="109"/>
    </location>
    <ligand>
        <name>NADPH</name>
        <dbReference type="ChEBI" id="CHEBI:57783"/>
    </ligand>
</feature>
<feature type="binding site" evidence="1">
    <location>
        <position position="109"/>
    </location>
    <ligand>
        <name>sn-glycerol 3-phosphate</name>
        <dbReference type="ChEBI" id="CHEBI:57597"/>
    </ligand>
</feature>
<feature type="binding site" evidence="1">
    <location>
        <position position="138"/>
    </location>
    <ligand>
        <name>sn-glycerol 3-phosphate</name>
        <dbReference type="ChEBI" id="CHEBI:57597"/>
    </ligand>
</feature>
<feature type="binding site" evidence="1">
    <location>
        <position position="140"/>
    </location>
    <ligand>
        <name>sn-glycerol 3-phosphate</name>
        <dbReference type="ChEBI" id="CHEBI:57597"/>
    </ligand>
</feature>
<feature type="binding site" evidence="1">
    <location>
        <position position="142"/>
    </location>
    <ligand>
        <name>NADPH</name>
        <dbReference type="ChEBI" id="CHEBI:57783"/>
    </ligand>
</feature>
<feature type="binding site" evidence="1">
    <location>
        <position position="194"/>
    </location>
    <ligand>
        <name>sn-glycerol 3-phosphate</name>
        <dbReference type="ChEBI" id="CHEBI:57597"/>
    </ligand>
</feature>
<feature type="binding site" evidence="1">
    <location>
        <position position="247"/>
    </location>
    <ligand>
        <name>sn-glycerol 3-phosphate</name>
        <dbReference type="ChEBI" id="CHEBI:57597"/>
    </ligand>
</feature>
<feature type="binding site" evidence="1">
    <location>
        <position position="257"/>
    </location>
    <ligand>
        <name>sn-glycerol 3-phosphate</name>
        <dbReference type="ChEBI" id="CHEBI:57597"/>
    </ligand>
</feature>
<feature type="binding site" evidence="1">
    <location>
        <position position="258"/>
    </location>
    <ligand>
        <name>NADPH</name>
        <dbReference type="ChEBI" id="CHEBI:57783"/>
    </ligand>
</feature>
<feature type="binding site" evidence="1">
    <location>
        <position position="258"/>
    </location>
    <ligand>
        <name>sn-glycerol 3-phosphate</name>
        <dbReference type="ChEBI" id="CHEBI:57597"/>
    </ligand>
</feature>
<feature type="binding site" evidence="1">
    <location>
        <position position="259"/>
    </location>
    <ligand>
        <name>sn-glycerol 3-phosphate</name>
        <dbReference type="ChEBI" id="CHEBI:57597"/>
    </ligand>
</feature>
<feature type="binding site" evidence="1">
    <location>
        <position position="282"/>
    </location>
    <ligand>
        <name>NADPH</name>
        <dbReference type="ChEBI" id="CHEBI:57783"/>
    </ligand>
</feature>
<feature type="binding site" evidence="1">
    <location>
        <position position="284"/>
    </location>
    <ligand>
        <name>NADPH</name>
        <dbReference type="ChEBI" id="CHEBI:57783"/>
    </ligand>
</feature>
<sequence length="338" mass="35788">MKNSADITVLGAGSYGTALAISLASNGHKTLLWGHDPVHMQTLAQDKCNQAFLPGIAFPDCLQIEADLAKALAASNNVLVVVPSHVFGTVLEQAKPLLRSDARIVWATKGLEPETGRLLQDVARDVLGEQYPLAVLSGPTFAKELAMGLPTAISVAGTCPTFTNDLVELLHSPKRLRVYANDDFTGLQLGGAVKNVIAIGAGMSDGIGFGANARTALITRGLVELTRLGEALGANAATFMGMAGLGDLVLTCTDNQSRNRRFGLALGKGCDVMTAQAEIGQVVEGYRNTKEVFTLAKRLGVEMPITEQIYQVLYQGKSPVDAAKELLSREKKSETPAQ</sequence>
<name>GPDA_SHEB8</name>
<keyword id="KW-0963">Cytoplasm</keyword>
<keyword id="KW-0444">Lipid biosynthesis</keyword>
<keyword id="KW-0443">Lipid metabolism</keyword>
<keyword id="KW-0520">NAD</keyword>
<keyword id="KW-0521">NADP</keyword>
<keyword id="KW-0547">Nucleotide-binding</keyword>
<keyword id="KW-0560">Oxidoreductase</keyword>
<keyword id="KW-0594">Phospholipid biosynthesis</keyword>
<keyword id="KW-1208">Phospholipid metabolism</keyword>
<organism>
    <name type="scientific">Shewanella baltica (strain OS185)</name>
    <dbReference type="NCBI Taxonomy" id="402882"/>
    <lineage>
        <taxon>Bacteria</taxon>
        <taxon>Pseudomonadati</taxon>
        <taxon>Pseudomonadota</taxon>
        <taxon>Gammaproteobacteria</taxon>
        <taxon>Alteromonadales</taxon>
        <taxon>Shewanellaceae</taxon>
        <taxon>Shewanella</taxon>
    </lineage>
</organism>
<evidence type="ECO:0000255" key="1">
    <source>
        <dbReference type="HAMAP-Rule" id="MF_00394"/>
    </source>
</evidence>
<comment type="function">
    <text evidence="1">Catalyzes the reduction of the glycolytic intermediate dihydroxyacetone phosphate (DHAP) to sn-glycerol 3-phosphate (G3P), the key precursor for phospholipid synthesis.</text>
</comment>
<comment type="catalytic activity">
    <reaction evidence="1">
        <text>sn-glycerol 3-phosphate + NAD(+) = dihydroxyacetone phosphate + NADH + H(+)</text>
        <dbReference type="Rhea" id="RHEA:11092"/>
        <dbReference type="ChEBI" id="CHEBI:15378"/>
        <dbReference type="ChEBI" id="CHEBI:57540"/>
        <dbReference type="ChEBI" id="CHEBI:57597"/>
        <dbReference type="ChEBI" id="CHEBI:57642"/>
        <dbReference type="ChEBI" id="CHEBI:57945"/>
        <dbReference type="EC" id="1.1.1.94"/>
    </reaction>
    <physiologicalReaction direction="right-to-left" evidence="1">
        <dbReference type="Rhea" id="RHEA:11094"/>
    </physiologicalReaction>
</comment>
<comment type="catalytic activity">
    <reaction evidence="1">
        <text>sn-glycerol 3-phosphate + NADP(+) = dihydroxyacetone phosphate + NADPH + H(+)</text>
        <dbReference type="Rhea" id="RHEA:11096"/>
        <dbReference type="ChEBI" id="CHEBI:15378"/>
        <dbReference type="ChEBI" id="CHEBI:57597"/>
        <dbReference type="ChEBI" id="CHEBI:57642"/>
        <dbReference type="ChEBI" id="CHEBI:57783"/>
        <dbReference type="ChEBI" id="CHEBI:58349"/>
        <dbReference type="EC" id="1.1.1.94"/>
    </reaction>
    <physiologicalReaction direction="right-to-left" evidence="1">
        <dbReference type="Rhea" id="RHEA:11098"/>
    </physiologicalReaction>
</comment>
<comment type="pathway">
    <text evidence="1">Membrane lipid metabolism; glycerophospholipid metabolism.</text>
</comment>
<comment type="subcellular location">
    <subcellularLocation>
        <location evidence="1">Cytoplasm</location>
    </subcellularLocation>
</comment>
<comment type="similarity">
    <text evidence="1">Belongs to the NAD-dependent glycerol-3-phosphate dehydrogenase family.</text>
</comment>
<gene>
    <name evidence="1" type="primary">gpsA</name>
    <name type="ordered locus">Shew185_0046</name>
</gene>
<protein>
    <recommendedName>
        <fullName evidence="1">Glycerol-3-phosphate dehydrogenase [NAD(P)+]</fullName>
        <ecNumber evidence="1">1.1.1.94</ecNumber>
    </recommendedName>
    <alternativeName>
        <fullName evidence="1">NAD(P)(+)-dependent glycerol-3-phosphate dehydrogenase</fullName>
    </alternativeName>
    <alternativeName>
        <fullName evidence="1">NAD(P)H-dependent dihydroxyacetone-phosphate reductase</fullName>
    </alternativeName>
</protein>
<proteinExistence type="inferred from homology"/>
<accession>A6WHD0</accession>
<reference key="1">
    <citation type="submission" date="2007-07" db="EMBL/GenBank/DDBJ databases">
        <title>Complete sequence of chromosome of Shewanella baltica OS185.</title>
        <authorList>
            <consortium name="US DOE Joint Genome Institute"/>
            <person name="Copeland A."/>
            <person name="Lucas S."/>
            <person name="Lapidus A."/>
            <person name="Barry K."/>
            <person name="Glavina del Rio T."/>
            <person name="Dalin E."/>
            <person name="Tice H."/>
            <person name="Pitluck S."/>
            <person name="Sims D."/>
            <person name="Brettin T."/>
            <person name="Bruce D."/>
            <person name="Detter J.C."/>
            <person name="Han C."/>
            <person name="Schmutz J."/>
            <person name="Larimer F."/>
            <person name="Land M."/>
            <person name="Hauser L."/>
            <person name="Kyrpides N."/>
            <person name="Mikhailova N."/>
            <person name="Brettar I."/>
            <person name="Rodrigues J."/>
            <person name="Konstantinidis K."/>
            <person name="Tiedje J."/>
            <person name="Richardson P."/>
        </authorList>
    </citation>
    <scope>NUCLEOTIDE SEQUENCE [LARGE SCALE GENOMIC DNA]</scope>
    <source>
        <strain>OS185</strain>
    </source>
</reference>
<dbReference type="EC" id="1.1.1.94" evidence="1"/>
<dbReference type="EMBL" id="CP000753">
    <property type="protein sequence ID" value="ABS06219.1"/>
    <property type="molecule type" value="Genomic_DNA"/>
</dbReference>
<dbReference type="RefSeq" id="WP_006083776.1">
    <property type="nucleotide sequence ID" value="NC_009665.1"/>
</dbReference>
<dbReference type="SMR" id="A6WHD0"/>
<dbReference type="KEGG" id="sbm:Shew185_0046"/>
<dbReference type="HOGENOM" id="CLU_033449_0_2_6"/>
<dbReference type="UniPathway" id="UPA00940"/>
<dbReference type="GO" id="GO:0005829">
    <property type="term" value="C:cytosol"/>
    <property type="evidence" value="ECO:0007669"/>
    <property type="project" value="TreeGrafter"/>
</dbReference>
<dbReference type="GO" id="GO:0047952">
    <property type="term" value="F:glycerol-3-phosphate dehydrogenase [NAD(P)+] activity"/>
    <property type="evidence" value="ECO:0007669"/>
    <property type="project" value="UniProtKB-UniRule"/>
</dbReference>
<dbReference type="GO" id="GO:0051287">
    <property type="term" value="F:NAD binding"/>
    <property type="evidence" value="ECO:0007669"/>
    <property type="project" value="InterPro"/>
</dbReference>
<dbReference type="GO" id="GO:0005975">
    <property type="term" value="P:carbohydrate metabolic process"/>
    <property type="evidence" value="ECO:0007669"/>
    <property type="project" value="InterPro"/>
</dbReference>
<dbReference type="GO" id="GO:0046167">
    <property type="term" value="P:glycerol-3-phosphate biosynthetic process"/>
    <property type="evidence" value="ECO:0007669"/>
    <property type="project" value="UniProtKB-UniRule"/>
</dbReference>
<dbReference type="GO" id="GO:0046168">
    <property type="term" value="P:glycerol-3-phosphate catabolic process"/>
    <property type="evidence" value="ECO:0007669"/>
    <property type="project" value="InterPro"/>
</dbReference>
<dbReference type="GO" id="GO:0046474">
    <property type="term" value="P:glycerophospholipid biosynthetic process"/>
    <property type="evidence" value="ECO:0007669"/>
    <property type="project" value="TreeGrafter"/>
</dbReference>
<dbReference type="FunFam" id="1.10.1040.10:FF:000001">
    <property type="entry name" value="Glycerol-3-phosphate dehydrogenase [NAD(P)+]"/>
    <property type="match status" value="1"/>
</dbReference>
<dbReference type="FunFam" id="3.40.50.720:FF:000019">
    <property type="entry name" value="Glycerol-3-phosphate dehydrogenase [NAD(P)+]"/>
    <property type="match status" value="1"/>
</dbReference>
<dbReference type="Gene3D" id="1.10.1040.10">
    <property type="entry name" value="N-(1-d-carboxylethyl)-l-norvaline Dehydrogenase, domain 2"/>
    <property type="match status" value="1"/>
</dbReference>
<dbReference type="Gene3D" id="3.40.50.720">
    <property type="entry name" value="NAD(P)-binding Rossmann-like Domain"/>
    <property type="match status" value="1"/>
</dbReference>
<dbReference type="HAMAP" id="MF_00394">
    <property type="entry name" value="NAD_Glyc3P_dehydrog"/>
    <property type="match status" value="1"/>
</dbReference>
<dbReference type="InterPro" id="IPR008927">
    <property type="entry name" value="6-PGluconate_DH-like_C_sf"/>
</dbReference>
<dbReference type="InterPro" id="IPR013328">
    <property type="entry name" value="6PGD_dom2"/>
</dbReference>
<dbReference type="InterPro" id="IPR006168">
    <property type="entry name" value="G3P_DH_NAD-dep"/>
</dbReference>
<dbReference type="InterPro" id="IPR006109">
    <property type="entry name" value="G3P_DH_NAD-dep_C"/>
</dbReference>
<dbReference type="InterPro" id="IPR011128">
    <property type="entry name" value="G3P_DH_NAD-dep_N"/>
</dbReference>
<dbReference type="InterPro" id="IPR036291">
    <property type="entry name" value="NAD(P)-bd_dom_sf"/>
</dbReference>
<dbReference type="NCBIfam" id="NF000939">
    <property type="entry name" value="PRK00094.1-1"/>
    <property type="match status" value="1"/>
</dbReference>
<dbReference type="NCBIfam" id="NF000940">
    <property type="entry name" value="PRK00094.1-2"/>
    <property type="match status" value="1"/>
</dbReference>
<dbReference type="NCBIfam" id="NF000942">
    <property type="entry name" value="PRK00094.1-4"/>
    <property type="match status" value="1"/>
</dbReference>
<dbReference type="PANTHER" id="PTHR11728">
    <property type="entry name" value="GLYCEROL-3-PHOSPHATE DEHYDROGENASE"/>
    <property type="match status" value="1"/>
</dbReference>
<dbReference type="PANTHER" id="PTHR11728:SF1">
    <property type="entry name" value="GLYCEROL-3-PHOSPHATE DEHYDROGENASE [NAD(+)] 2, CHLOROPLASTIC"/>
    <property type="match status" value="1"/>
</dbReference>
<dbReference type="Pfam" id="PF07479">
    <property type="entry name" value="NAD_Gly3P_dh_C"/>
    <property type="match status" value="1"/>
</dbReference>
<dbReference type="Pfam" id="PF01210">
    <property type="entry name" value="NAD_Gly3P_dh_N"/>
    <property type="match status" value="1"/>
</dbReference>
<dbReference type="PIRSF" id="PIRSF000114">
    <property type="entry name" value="Glycerol-3-P_dh"/>
    <property type="match status" value="1"/>
</dbReference>
<dbReference type="PRINTS" id="PR00077">
    <property type="entry name" value="GPDHDRGNASE"/>
</dbReference>
<dbReference type="SUPFAM" id="SSF48179">
    <property type="entry name" value="6-phosphogluconate dehydrogenase C-terminal domain-like"/>
    <property type="match status" value="1"/>
</dbReference>
<dbReference type="SUPFAM" id="SSF51735">
    <property type="entry name" value="NAD(P)-binding Rossmann-fold domains"/>
    <property type="match status" value="1"/>
</dbReference>
<dbReference type="PROSITE" id="PS00957">
    <property type="entry name" value="NAD_G3PDH"/>
    <property type="match status" value="1"/>
</dbReference>